<protein>
    <recommendedName>
        <fullName evidence="1">NADPH-dependent 7-cyano-7-deazaguanine reductase</fullName>
        <ecNumber evidence="1">1.7.1.13</ecNumber>
    </recommendedName>
    <alternativeName>
        <fullName evidence="1">7-cyano-7-carbaguanine reductase</fullName>
    </alternativeName>
    <alternativeName>
        <fullName evidence="1">NADPH-dependent nitrile oxidoreductase</fullName>
    </alternativeName>
    <alternativeName>
        <fullName evidence="1">PreQ(0) reductase</fullName>
    </alternativeName>
</protein>
<proteinExistence type="inferred from homology"/>
<evidence type="ECO:0000255" key="1">
    <source>
        <dbReference type="HAMAP-Rule" id="MF_00817"/>
    </source>
</evidence>
<comment type="function">
    <text evidence="1">Catalyzes the NADPH-dependent reduction of 7-cyano-7-deazaguanine (preQ0) to 7-aminomethyl-7-deazaguanine (preQ1).</text>
</comment>
<comment type="catalytic activity">
    <reaction evidence="1">
        <text>7-aminomethyl-7-carbaguanine + 2 NADP(+) = 7-cyano-7-deazaguanine + 2 NADPH + 3 H(+)</text>
        <dbReference type="Rhea" id="RHEA:13409"/>
        <dbReference type="ChEBI" id="CHEBI:15378"/>
        <dbReference type="ChEBI" id="CHEBI:45075"/>
        <dbReference type="ChEBI" id="CHEBI:57783"/>
        <dbReference type="ChEBI" id="CHEBI:58349"/>
        <dbReference type="ChEBI" id="CHEBI:58703"/>
        <dbReference type="EC" id="1.7.1.13"/>
    </reaction>
</comment>
<comment type="pathway">
    <text evidence="1">tRNA modification; tRNA-queuosine biosynthesis.</text>
</comment>
<comment type="subunit">
    <text evidence="1">Homodimer.</text>
</comment>
<comment type="subcellular location">
    <subcellularLocation>
        <location evidence="1">Cytoplasm</location>
    </subcellularLocation>
</comment>
<comment type="similarity">
    <text evidence="1">Belongs to the GTP cyclohydrolase I family. QueF type 2 subfamily.</text>
</comment>
<sequence length="271" mass="29612">MNTPEDSSLGREVAYPSGYDPSLLFPIPRAAGRAAVGLSGALPFVGRDRWHAYELSWLDAHGKPCVATATLHVPCESPALIESKSLKLYLNSLNATRFNSAEAVRARIATDLSTRAGADVSVEFGLPPIDAVGEGESIDALDIAIDDYGPPKADYLATHAGTVVEEVLASALLKSNCPVTGQPDWASVTLRYRGAPIDREGLLRYLVSFRDHADFHEQCVERIFQDLLVRCAPQWLVVEARYTRRGGLDINPVRTSPQMPTPLSIFRDLRQ</sequence>
<name>QUEF_XANCB</name>
<feature type="chain" id="PRO_1000134284" description="NADPH-dependent 7-cyano-7-deazaguanine reductase">
    <location>
        <begin position="1"/>
        <end position="271"/>
    </location>
</feature>
<feature type="active site" description="Thioimide intermediate" evidence="1">
    <location>
        <position position="177"/>
    </location>
</feature>
<feature type="active site" description="Proton donor" evidence="1">
    <location>
        <position position="184"/>
    </location>
</feature>
<feature type="binding site" evidence="1">
    <location>
        <begin position="81"/>
        <end position="83"/>
    </location>
    <ligand>
        <name>substrate</name>
    </ligand>
</feature>
<feature type="binding site" evidence="1">
    <location>
        <begin position="83"/>
        <end position="84"/>
    </location>
    <ligand>
        <name>NADPH</name>
        <dbReference type="ChEBI" id="CHEBI:57783"/>
    </ligand>
</feature>
<feature type="binding site" evidence="1">
    <location>
        <begin position="216"/>
        <end position="217"/>
    </location>
    <ligand>
        <name>substrate</name>
    </ligand>
</feature>
<feature type="binding site" evidence="1">
    <location>
        <begin position="245"/>
        <end position="246"/>
    </location>
    <ligand>
        <name>NADPH</name>
        <dbReference type="ChEBI" id="CHEBI:57783"/>
    </ligand>
</feature>
<organism>
    <name type="scientific">Xanthomonas campestris pv. campestris (strain B100)</name>
    <dbReference type="NCBI Taxonomy" id="509169"/>
    <lineage>
        <taxon>Bacteria</taxon>
        <taxon>Pseudomonadati</taxon>
        <taxon>Pseudomonadota</taxon>
        <taxon>Gammaproteobacteria</taxon>
        <taxon>Lysobacterales</taxon>
        <taxon>Lysobacteraceae</taxon>
        <taxon>Xanthomonas</taxon>
    </lineage>
</organism>
<gene>
    <name evidence="1" type="primary">queF</name>
    <name type="ordered locus">xcc-b100_3968</name>
</gene>
<keyword id="KW-0963">Cytoplasm</keyword>
<keyword id="KW-0521">NADP</keyword>
<keyword id="KW-0560">Oxidoreductase</keyword>
<keyword id="KW-0671">Queuosine biosynthesis</keyword>
<reference key="1">
    <citation type="journal article" date="2008" name="J. Biotechnol.">
        <title>The genome of Xanthomonas campestris pv. campestris B100 and its use for the reconstruction of metabolic pathways involved in xanthan biosynthesis.</title>
        <authorList>
            <person name="Vorhoelter F.-J."/>
            <person name="Schneiker S."/>
            <person name="Goesmann A."/>
            <person name="Krause L."/>
            <person name="Bekel T."/>
            <person name="Kaiser O."/>
            <person name="Linke B."/>
            <person name="Patschkowski T."/>
            <person name="Rueckert C."/>
            <person name="Schmid J."/>
            <person name="Sidhu V.K."/>
            <person name="Sieber V."/>
            <person name="Tauch A."/>
            <person name="Watt S.A."/>
            <person name="Weisshaar B."/>
            <person name="Becker A."/>
            <person name="Niehaus K."/>
            <person name="Puehler A."/>
        </authorList>
    </citation>
    <scope>NUCLEOTIDE SEQUENCE [LARGE SCALE GENOMIC DNA]</scope>
    <source>
        <strain>B100</strain>
    </source>
</reference>
<dbReference type="EC" id="1.7.1.13" evidence="1"/>
<dbReference type="EMBL" id="AM920689">
    <property type="protein sequence ID" value="CAP53335.1"/>
    <property type="molecule type" value="Genomic_DNA"/>
</dbReference>
<dbReference type="SMR" id="B0RWU6"/>
<dbReference type="KEGG" id="xca:xcc-b100_3968"/>
<dbReference type="HOGENOM" id="CLU_054738_0_0_6"/>
<dbReference type="UniPathway" id="UPA00392"/>
<dbReference type="Proteomes" id="UP000001188">
    <property type="component" value="Chromosome"/>
</dbReference>
<dbReference type="GO" id="GO:0005737">
    <property type="term" value="C:cytoplasm"/>
    <property type="evidence" value="ECO:0007669"/>
    <property type="project" value="UniProtKB-SubCell"/>
</dbReference>
<dbReference type="GO" id="GO:0033739">
    <property type="term" value="F:preQ1 synthase activity"/>
    <property type="evidence" value="ECO:0007669"/>
    <property type="project" value="UniProtKB-UniRule"/>
</dbReference>
<dbReference type="GO" id="GO:0008616">
    <property type="term" value="P:queuosine biosynthetic process"/>
    <property type="evidence" value="ECO:0007669"/>
    <property type="project" value="UniProtKB-UniRule"/>
</dbReference>
<dbReference type="GO" id="GO:0006400">
    <property type="term" value="P:tRNA modification"/>
    <property type="evidence" value="ECO:0007669"/>
    <property type="project" value="UniProtKB-UniRule"/>
</dbReference>
<dbReference type="Gene3D" id="3.30.1130.10">
    <property type="match status" value="2"/>
</dbReference>
<dbReference type="HAMAP" id="MF_00817">
    <property type="entry name" value="QueF_type2"/>
    <property type="match status" value="1"/>
</dbReference>
<dbReference type="InterPro" id="IPR043133">
    <property type="entry name" value="GTP-CH-I_C/QueF"/>
</dbReference>
<dbReference type="InterPro" id="IPR050084">
    <property type="entry name" value="NADPH_dep_7-cyano-7-deazaG_red"/>
</dbReference>
<dbReference type="InterPro" id="IPR029500">
    <property type="entry name" value="QueF"/>
</dbReference>
<dbReference type="InterPro" id="IPR029139">
    <property type="entry name" value="QueF_N"/>
</dbReference>
<dbReference type="InterPro" id="IPR016428">
    <property type="entry name" value="QueF_type2"/>
</dbReference>
<dbReference type="NCBIfam" id="TIGR03138">
    <property type="entry name" value="QueF"/>
    <property type="match status" value="1"/>
</dbReference>
<dbReference type="PANTHER" id="PTHR34354">
    <property type="entry name" value="NADPH-DEPENDENT 7-CYANO-7-DEAZAGUANINE REDUCTASE"/>
    <property type="match status" value="1"/>
</dbReference>
<dbReference type="PANTHER" id="PTHR34354:SF1">
    <property type="entry name" value="NADPH-DEPENDENT 7-CYANO-7-DEAZAGUANINE REDUCTASE"/>
    <property type="match status" value="1"/>
</dbReference>
<dbReference type="Pfam" id="PF14489">
    <property type="entry name" value="QueF"/>
    <property type="match status" value="1"/>
</dbReference>
<dbReference type="Pfam" id="PF14819">
    <property type="entry name" value="QueF_N"/>
    <property type="match status" value="1"/>
</dbReference>
<dbReference type="PIRSF" id="PIRSF004750">
    <property type="entry name" value="Nitrile_oxidored_YqcD_prd"/>
    <property type="match status" value="1"/>
</dbReference>
<dbReference type="SUPFAM" id="SSF55620">
    <property type="entry name" value="Tetrahydrobiopterin biosynthesis enzymes-like"/>
    <property type="match status" value="1"/>
</dbReference>
<accession>B0RWU6</accession>